<feature type="chain" id="PRO_0000457392" description="DNA-directed RNA polymerase 18 kDa subunit">
    <location>
        <begin position="1"/>
        <end position="161"/>
    </location>
</feature>
<sequence>MSSFVTNGYLPVTLEPHELTLDIKTNIRNAVYKAYLHREISGKMAKKIEIREDVELPLGEIVNNSVVINVPCVITYAYYHVGDIVRGTLNIEDESNVTIQCGDLICKLSRDSGTVSFSDSKYCFFRNGNAYDNGIEVSAVLMEAQQGTESSFVFLANIVDS</sequence>
<dbReference type="EC" id="2.7.7.6"/>
<dbReference type="EMBL" id="MT903340">
    <property type="protein sequence ID" value="QNP12974.1"/>
    <property type="molecule type" value="Genomic_DNA"/>
</dbReference>
<dbReference type="RefSeq" id="NP_536531.1">
    <property type="nucleotide sequence ID" value="NC_003310.1"/>
</dbReference>
<dbReference type="RefSeq" id="YP_010377101.1">
    <property type="nucleotide sequence ID" value="NC_063383.1"/>
</dbReference>
<dbReference type="SMR" id="A0A7H0DN91"/>
<dbReference type="GeneID" id="72551514"/>
<dbReference type="GeneID" id="929015"/>
<dbReference type="KEGG" id="vg:929015"/>
<dbReference type="Proteomes" id="UP000516359">
    <property type="component" value="Genome"/>
</dbReference>
<dbReference type="GO" id="GO:0000428">
    <property type="term" value="C:DNA-directed RNA polymerase complex"/>
    <property type="evidence" value="ECO:0007669"/>
    <property type="project" value="UniProtKB-KW"/>
</dbReference>
<dbReference type="GO" id="GO:0044423">
    <property type="term" value="C:virion component"/>
    <property type="evidence" value="ECO:0007669"/>
    <property type="project" value="UniProtKB-KW"/>
</dbReference>
<dbReference type="GO" id="GO:0003677">
    <property type="term" value="F:DNA binding"/>
    <property type="evidence" value="ECO:0007669"/>
    <property type="project" value="InterPro"/>
</dbReference>
<dbReference type="GO" id="GO:0003899">
    <property type="term" value="F:DNA-directed RNA polymerase activity"/>
    <property type="evidence" value="ECO:0007669"/>
    <property type="project" value="InterPro"/>
</dbReference>
<dbReference type="GO" id="GO:0019083">
    <property type="term" value="P:viral transcription"/>
    <property type="evidence" value="ECO:0007669"/>
    <property type="project" value="InterPro"/>
</dbReference>
<dbReference type="InterPro" id="IPR004973">
    <property type="entry name" value="DNA-dir_RNA_pol_18kDa_poxviral"/>
</dbReference>
<dbReference type="Pfam" id="PF03293">
    <property type="entry name" value="Pox_RNA_pol"/>
    <property type="match status" value="1"/>
</dbReference>
<reference key="1">
    <citation type="journal article" date="2022" name="J. Infect. Dis.">
        <title>Exportation of Monkeypox virus from the African continent.</title>
        <authorList>
            <person name="Mauldin M.R."/>
            <person name="McCollum A.M."/>
            <person name="Nakazawa Y.J."/>
            <person name="Mandra A."/>
            <person name="Whitehouse E.R."/>
            <person name="Davidson W."/>
            <person name="Zhao H."/>
            <person name="Gao J."/>
            <person name="Li Y."/>
            <person name="Doty J."/>
            <person name="Yinka-Ogunleye A."/>
            <person name="Akinpelu A."/>
            <person name="Aruna O."/>
            <person name="Naidoo D."/>
            <person name="Lewandowski K."/>
            <person name="Afrough B."/>
            <person name="Graham V."/>
            <person name="Aarons E."/>
            <person name="Hewson R."/>
            <person name="Vipond R."/>
            <person name="Dunning J."/>
            <person name="Chand M."/>
            <person name="Brown C."/>
            <person name="Cohen-Gihon I."/>
            <person name="Erez N."/>
            <person name="Shifman O."/>
            <person name="Israeli O."/>
            <person name="Sharon M."/>
            <person name="Schwartz E."/>
            <person name="Beth-Din A."/>
            <person name="Zvi A."/>
            <person name="Mak T.M."/>
            <person name="Ng Y.K."/>
            <person name="Cui L."/>
            <person name="Lin R.T.P."/>
            <person name="Olson V.A."/>
            <person name="Brooks T."/>
            <person name="Paran N."/>
            <person name="Ihekweazu C."/>
            <person name="Reynolds M.G."/>
        </authorList>
    </citation>
    <scope>NUCLEOTIDE SEQUENCE [LARGE SCALE GENOMIC DNA]</scope>
    <source>
        <strain>MPXV-M5312_HM12_Rivers</strain>
    </source>
</reference>
<accession>A0A7H0DN91</accession>
<keyword id="KW-0240">DNA-directed RNA polymerase</keyword>
<keyword id="KW-1185">Reference proteome</keyword>
<keyword id="KW-0804">Transcription</keyword>
<keyword id="KW-0808">Transferase</keyword>
<keyword id="KW-0946">Virion</keyword>
<evidence type="ECO:0000250" key="1">
    <source>
        <dbReference type="UniProtKB" id="P04195"/>
    </source>
</evidence>
<evidence type="ECO:0000250" key="2">
    <source>
        <dbReference type="UniProtKB" id="P04310"/>
    </source>
</evidence>
<evidence type="ECO:0000250" key="3">
    <source>
        <dbReference type="UniProtKB" id="Q76ZS0"/>
    </source>
</evidence>
<evidence type="ECO:0000305" key="4"/>
<protein>
    <recommendedName>
        <fullName>DNA-directed RNA polymerase 18 kDa subunit</fullName>
        <ecNumber>2.7.7.6</ecNumber>
    </recommendedName>
</protein>
<organismHost>
    <name type="scientific">Cynomys gunnisoni</name>
    <name type="common">Gunnison's prairie dog</name>
    <name type="synonym">Spermophilus gunnisoni</name>
    <dbReference type="NCBI Taxonomy" id="45479"/>
</organismHost>
<organismHost>
    <name type="scientific">Cynomys leucurus</name>
    <name type="common">White-tailed prairie dog</name>
    <dbReference type="NCBI Taxonomy" id="99825"/>
</organismHost>
<organismHost>
    <name type="scientific">Cynomys ludovicianus</name>
    <name type="common">Black-tailed prairie dog</name>
    <dbReference type="NCBI Taxonomy" id="45480"/>
</organismHost>
<organismHost>
    <name type="scientific">Cynomys mexicanus</name>
    <name type="common">Mexican prairie dog</name>
    <dbReference type="NCBI Taxonomy" id="99826"/>
</organismHost>
<organismHost>
    <name type="scientific">Cynomys parvidens</name>
    <name type="common">Utah prairie dog</name>
    <dbReference type="NCBI Taxonomy" id="99827"/>
</organismHost>
<organismHost>
    <name type="scientific">Gliridae</name>
    <name type="common">dormice</name>
    <dbReference type="NCBI Taxonomy" id="30650"/>
</organismHost>
<organismHost>
    <name type="scientific">Heliosciurus ruwenzorii</name>
    <name type="common">Ruwenzori sun squirrel</name>
    <dbReference type="NCBI Taxonomy" id="226685"/>
</organismHost>
<organismHost>
    <name type="scientific">Homo sapiens</name>
    <name type="common">Human</name>
    <dbReference type="NCBI Taxonomy" id="9606"/>
</organismHost>
<organismHost>
    <name type="scientific">Mus musculus</name>
    <name type="common">Mouse</name>
    <dbReference type="NCBI Taxonomy" id="10090"/>
</organismHost>
<name>RP18_MONPV</name>
<organism>
    <name type="scientific">Monkeypox virus</name>
    <dbReference type="NCBI Taxonomy" id="10244"/>
    <lineage>
        <taxon>Viruses</taxon>
        <taxon>Varidnaviria</taxon>
        <taxon>Bamfordvirae</taxon>
        <taxon>Nucleocytoviricota</taxon>
        <taxon>Pokkesviricetes</taxon>
        <taxon>Chitovirales</taxon>
        <taxon>Poxviridae</taxon>
        <taxon>Chordopoxvirinae</taxon>
        <taxon>Orthopoxvirus</taxon>
    </lineage>
</organism>
<comment type="function">
    <text evidence="2">Part of the DNA-dependent RNA polymerase which catalyzes the transcription of viral DNA into RNA using the four ribonucleoside triphosphates as substrates. Responsible for the transcription of early, intermediate and late genes. DNA-dependent RNA polymerase associates with the early transcription factor (ETF), itself composed of OPG118 and OPG133, thereby allowing the early genes transcription. Late transcription, and probably also intermediate transcription, require newly synthesized RNA polymerase.</text>
</comment>
<comment type="catalytic activity">
    <reaction evidence="2">
        <text>RNA(n) + a ribonucleoside 5'-triphosphate = RNA(n+1) + diphosphate</text>
        <dbReference type="Rhea" id="RHEA:21248"/>
        <dbReference type="Rhea" id="RHEA-COMP:14527"/>
        <dbReference type="Rhea" id="RHEA-COMP:17342"/>
        <dbReference type="ChEBI" id="CHEBI:33019"/>
        <dbReference type="ChEBI" id="CHEBI:61557"/>
        <dbReference type="ChEBI" id="CHEBI:140395"/>
        <dbReference type="EC" id="2.7.7.6"/>
    </reaction>
</comment>
<comment type="subunit">
    <text evidence="3">The DNA-dependent RNA polymerase used for intermediate and late genes expression consists of eight subunits Rpo30/OPG66, Rpo7/OPG90, Rpo22/OPG103, Rpo147/OPG105, Rpo18/OPG119, Rpo19/OPG131, Rpo132/OPG151 and Rpo35/OPG156. The same holoenzyme, with the addition of the transcription-specificity factor OPG109, is used for early gene expression.</text>
</comment>
<comment type="subcellular location">
    <subcellularLocation>
        <location evidence="2">Virion</location>
    </subcellularLocation>
    <text evidence="2">All the enzymes and other proteins required to synthesize early mRNAs are packaged within the virion core along with the DNA genome. This is necessary because viral early mRNAs are synthesized within minutes after virus entry into the cell and are extruded through pores in the core particle.</text>
</comment>
<comment type="PTM">
    <text evidence="1">Apparently non-glycosylated.</text>
</comment>
<comment type="similarity">
    <text evidence="4">Belongs to the poxviridae DNA-directed RNA polymerase 18 kDa subunit family.</text>
</comment>
<gene>
    <name type="primary">OPG119</name>
    <name type="synonym">RPO18</name>
    <name type="ORF">MPXV102</name>
</gene>
<proteinExistence type="inferred from homology"/>